<comment type="function">
    <text evidence="1">Required for the formation of a threonylcarbamoyl group on adenosine at position 37 (t(6)A37) in tRNAs that read codons beginning with adenine. Is involved in the transfer of the threonylcarbamoyl moiety of threonylcarbamoyl-AMP (TC-AMP) to the N6 group of A37, together with TsaE and TsaB. TsaD likely plays a direct catalytic role in this reaction.</text>
</comment>
<comment type="catalytic activity">
    <reaction evidence="1">
        <text>L-threonylcarbamoyladenylate + adenosine(37) in tRNA = N(6)-L-threonylcarbamoyladenosine(37) in tRNA + AMP + H(+)</text>
        <dbReference type="Rhea" id="RHEA:37059"/>
        <dbReference type="Rhea" id="RHEA-COMP:10162"/>
        <dbReference type="Rhea" id="RHEA-COMP:10163"/>
        <dbReference type="ChEBI" id="CHEBI:15378"/>
        <dbReference type="ChEBI" id="CHEBI:73682"/>
        <dbReference type="ChEBI" id="CHEBI:74411"/>
        <dbReference type="ChEBI" id="CHEBI:74418"/>
        <dbReference type="ChEBI" id="CHEBI:456215"/>
        <dbReference type="EC" id="2.3.1.234"/>
    </reaction>
</comment>
<comment type="cofactor">
    <cofactor evidence="1">
        <name>Fe(2+)</name>
        <dbReference type="ChEBI" id="CHEBI:29033"/>
    </cofactor>
    <text evidence="1">Binds 1 Fe(2+) ion per subunit.</text>
</comment>
<comment type="subcellular location">
    <subcellularLocation>
        <location evidence="1">Cytoplasm</location>
    </subcellularLocation>
</comment>
<comment type="similarity">
    <text evidence="1">Belongs to the KAE1 / TsaD family.</text>
</comment>
<reference key="1">
    <citation type="journal article" date="2006" name="Genome Res.">
        <title>Skewed genomic variability in strains of the toxigenic bacterial pathogen, Clostridium perfringens.</title>
        <authorList>
            <person name="Myers G.S.A."/>
            <person name="Rasko D.A."/>
            <person name="Cheung J.K."/>
            <person name="Ravel J."/>
            <person name="Seshadri R."/>
            <person name="DeBoy R.T."/>
            <person name="Ren Q."/>
            <person name="Varga J."/>
            <person name="Awad M.M."/>
            <person name="Brinkac L.M."/>
            <person name="Daugherty S.C."/>
            <person name="Haft D.H."/>
            <person name="Dodson R.J."/>
            <person name="Madupu R."/>
            <person name="Nelson W.C."/>
            <person name="Rosovitz M.J."/>
            <person name="Sullivan S.A."/>
            <person name="Khouri H."/>
            <person name="Dimitrov G.I."/>
            <person name="Watkins K.L."/>
            <person name="Mulligan S."/>
            <person name="Benton J."/>
            <person name="Radune D."/>
            <person name="Fisher D.J."/>
            <person name="Atkins H.S."/>
            <person name="Hiscox T."/>
            <person name="Jost B.H."/>
            <person name="Billington S.J."/>
            <person name="Songer J.G."/>
            <person name="McClane B.A."/>
            <person name="Titball R.W."/>
            <person name="Rood J.I."/>
            <person name="Melville S.B."/>
            <person name="Paulsen I.T."/>
        </authorList>
    </citation>
    <scope>NUCLEOTIDE SEQUENCE [LARGE SCALE GENOMIC DNA]</scope>
    <source>
        <strain>ATCC 13124 / DSM 756 / JCM 1290 / NCIMB 6125 / NCTC 8237 / S 107 / Type A</strain>
    </source>
</reference>
<accession>Q0TN80</accession>
<name>TSAD_CLOP1</name>
<feature type="chain" id="PRO_0000303331" description="tRNA N6-adenosine threonylcarbamoyltransferase">
    <location>
        <begin position="1"/>
        <end position="339"/>
    </location>
</feature>
<feature type="binding site" evidence="1">
    <location>
        <position position="114"/>
    </location>
    <ligand>
        <name>Fe cation</name>
        <dbReference type="ChEBI" id="CHEBI:24875"/>
    </ligand>
</feature>
<feature type="binding site" evidence="1">
    <location>
        <position position="118"/>
    </location>
    <ligand>
        <name>Fe cation</name>
        <dbReference type="ChEBI" id="CHEBI:24875"/>
    </ligand>
</feature>
<feature type="binding site" evidence="1">
    <location>
        <begin position="137"/>
        <end position="141"/>
    </location>
    <ligand>
        <name>substrate</name>
    </ligand>
</feature>
<feature type="binding site" evidence="1">
    <location>
        <position position="170"/>
    </location>
    <ligand>
        <name>substrate</name>
    </ligand>
</feature>
<feature type="binding site" evidence="1">
    <location>
        <position position="183"/>
    </location>
    <ligand>
        <name>substrate</name>
    </ligand>
</feature>
<feature type="binding site" evidence="1">
    <location>
        <position position="187"/>
    </location>
    <ligand>
        <name>substrate</name>
    </ligand>
</feature>
<feature type="binding site" evidence="1">
    <location>
        <position position="277"/>
    </location>
    <ligand>
        <name>substrate</name>
    </ligand>
</feature>
<feature type="binding site" evidence="1">
    <location>
        <position position="305"/>
    </location>
    <ligand>
        <name>Fe cation</name>
        <dbReference type="ChEBI" id="CHEBI:24875"/>
    </ligand>
</feature>
<organism>
    <name type="scientific">Clostridium perfringens (strain ATCC 13124 / DSM 756 / JCM 1290 / NCIMB 6125 / NCTC 8237 / Type A)</name>
    <dbReference type="NCBI Taxonomy" id="195103"/>
    <lineage>
        <taxon>Bacteria</taxon>
        <taxon>Bacillati</taxon>
        <taxon>Bacillota</taxon>
        <taxon>Clostridia</taxon>
        <taxon>Eubacteriales</taxon>
        <taxon>Clostridiaceae</taxon>
        <taxon>Clostridium</taxon>
    </lineage>
</organism>
<gene>
    <name evidence="1" type="primary">tsaD</name>
    <name type="synonym">gcp</name>
    <name type="ordered locus">CPF_2496</name>
</gene>
<protein>
    <recommendedName>
        <fullName evidence="1">tRNA N6-adenosine threonylcarbamoyltransferase</fullName>
        <ecNumber evidence="1">2.3.1.234</ecNumber>
    </recommendedName>
    <alternativeName>
        <fullName evidence="1">N6-L-threonylcarbamoyladenine synthase</fullName>
        <shortName evidence="1">t(6)A synthase</shortName>
    </alternativeName>
    <alternativeName>
        <fullName evidence="1">t(6)A37 threonylcarbamoyladenosine biosynthesis protein TsaD</fullName>
    </alternativeName>
    <alternativeName>
        <fullName evidence="1">tRNA threonylcarbamoyladenosine biosynthesis protein TsaD</fullName>
    </alternativeName>
</protein>
<dbReference type="EC" id="2.3.1.234" evidence="1"/>
<dbReference type="EMBL" id="CP000246">
    <property type="protein sequence ID" value="ABG82422.1"/>
    <property type="molecule type" value="Genomic_DNA"/>
</dbReference>
<dbReference type="RefSeq" id="WP_003452273.1">
    <property type="nucleotide sequence ID" value="NC_008261.1"/>
</dbReference>
<dbReference type="SMR" id="Q0TN80"/>
<dbReference type="STRING" id="195103.CPF_2496"/>
<dbReference type="PaxDb" id="195103-CPF_2496"/>
<dbReference type="GeneID" id="93001226"/>
<dbReference type="KEGG" id="cpf:CPF_2496"/>
<dbReference type="eggNOG" id="COG0533">
    <property type="taxonomic scope" value="Bacteria"/>
</dbReference>
<dbReference type="HOGENOM" id="CLU_023208_0_2_9"/>
<dbReference type="Proteomes" id="UP000001823">
    <property type="component" value="Chromosome"/>
</dbReference>
<dbReference type="GO" id="GO:0005737">
    <property type="term" value="C:cytoplasm"/>
    <property type="evidence" value="ECO:0007669"/>
    <property type="project" value="UniProtKB-SubCell"/>
</dbReference>
<dbReference type="GO" id="GO:0005506">
    <property type="term" value="F:iron ion binding"/>
    <property type="evidence" value="ECO:0007669"/>
    <property type="project" value="UniProtKB-UniRule"/>
</dbReference>
<dbReference type="GO" id="GO:0061711">
    <property type="term" value="F:N(6)-L-threonylcarbamoyladenine synthase activity"/>
    <property type="evidence" value="ECO:0007669"/>
    <property type="project" value="UniProtKB-EC"/>
</dbReference>
<dbReference type="GO" id="GO:0002949">
    <property type="term" value="P:tRNA threonylcarbamoyladenosine modification"/>
    <property type="evidence" value="ECO:0007669"/>
    <property type="project" value="UniProtKB-UniRule"/>
</dbReference>
<dbReference type="CDD" id="cd24133">
    <property type="entry name" value="ASKHA_NBD_TsaD_bac"/>
    <property type="match status" value="1"/>
</dbReference>
<dbReference type="FunFam" id="3.30.420.40:FF:000012">
    <property type="entry name" value="tRNA N6-adenosine threonylcarbamoyltransferase"/>
    <property type="match status" value="1"/>
</dbReference>
<dbReference type="FunFam" id="3.30.420.40:FF:000040">
    <property type="entry name" value="tRNA N6-adenosine threonylcarbamoyltransferase"/>
    <property type="match status" value="1"/>
</dbReference>
<dbReference type="Gene3D" id="3.30.420.40">
    <property type="match status" value="2"/>
</dbReference>
<dbReference type="HAMAP" id="MF_01445">
    <property type="entry name" value="TsaD"/>
    <property type="match status" value="1"/>
</dbReference>
<dbReference type="InterPro" id="IPR043129">
    <property type="entry name" value="ATPase_NBD"/>
</dbReference>
<dbReference type="InterPro" id="IPR000905">
    <property type="entry name" value="Gcp-like_dom"/>
</dbReference>
<dbReference type="InterPro" id="IPR017861">
    <property type="entry name" value="KAE1/TsaD"/>
</dbReference>
<dbReference type="InterPro" id="IPR017860">
    <property type="entry name" value="Peptidase_M22_CS"/>
</dbReference>
<dbReference type="InterPro" id="IPR022450">
    <property type="entry name" value="TsaD"/>
</dbReference>
<dbReference type="NCBIfam" id="TIGR00329">
    <property type="entry name" value="gcp_kae1"/>
    <property type="match status" value="1"/>
</dbReference>
<dbReference type="NCBIfam" id="TIGR03723">
    <property type="entry name" value="T6A_TsaD_YgjD"/>
    <property type="match status" value="1"/>
</dbReference>
<dbReference type="PANTHER" id="PTHR11735">
    <property type="entry name" value="TRNA N6-ADENOSINE THREONYLCARBAMOYLTRANSFERASE"/>
    <property type="match status" value="1"/>
</dbReference>
<dbReference type="PANTHER" id="PTHR11735:SF6">
    <property type="entry name" value="TRNA N6-ADENOSINE THREONYLCARBAMOYLTRANSFERASE, MITOCHONDRIAL"/>
    <property type="match status" value="1"/>
</dbReference>
<dbReference type="Pfam" id="PF00814">
    <property type="entry name" value="TsaD"/>
    <property type="match status" value="1"/>
</dbReference>
<dbReference type="PRINTS" id="PR00789">
    <property type="entry name" value="OSIALOPTASE"/>
</dbReference>
<dbReference type="SUPFAM" id="SSF53067">
    <property type="entry name" value="Actin-like ATPase domain"/>
    <property type="match status" value="2"/>
</dbReference>
<dbReference type="PROSITE" id="PS01016">
    <property type="entry name" value="GLYCOPROTEASE"/>
    <property type="match status" value="1"/>
</dbReference>
<keyword id="KW-0012">Acyltransferase</keyword>
<keyword id="KW-0963">Cytoplasm</keyword>
<keyword id="KW-0408">Iron</keyword>
<keyword id="KW-0479">Metal-binding</keyword>
<keyword id="KW-0808">Transferase</keyword>
<keyword id="KW-0819">tRNA processing</keyword>
<sequence>MDKKIILAIESSCDETAAAVVVNGREVLSNIISSQIDIHTKFGGVVPEVASRKHIEAINAVVEEALEVAGVTFDDIDAIAVTYGPGLVGALLVGLQYAKGLAYSLDKPLIGVNHIEGHISANFIDHKDLEPPFVCLVVSGGHTFVVHVEDYGKFEIIGETRDDAAGEAFDKVARAVGLGYPGGPKIDKLAKEGNSDAIKFPKANFHDDTLDFSFSGVKSAVLNYLNKMEMKNEEINKADVVASFQKAVVEVLTDNAIKTCKMRKADKIAIAGGVASNSALRENLLREGEKRGIKVLFPSPILCTDNAAMIGSAAYFELLKGNVSEMSLNAKPNLRLGER</sequence>
<proteinExistence type="inferred from homology"/>
<evidence type="ECO:0000255" key="1">
    <source>
        <dbReference type="HAMAP-Rule" id="MF_01445"/>
    </source>
</evidence>